<dbReference type="EMBL" id="U15441">
    <property type="status" value="NOT_ANNOTATED_CDS"/>
    <property type="molecule type" value="Genomic_RNA"/>
</dbReference>
<dbReference type="SMR" id="P0C790"/>
<dbReference type="Proteomes" id="UP000001099">
    <property type="component" value="Genome"/>
</dbReference>
<proteinExistence type="evidence at protein level"/>
<comment type="subunit">
    <text evidence="1">Self-associates.</text>
</comment>
<reference key="1">
    <citation type="journal article" date="1995" name="Virology">
        <title>Genome structure and phylogenetic analysis of lettuce infectious yellows virus, a whitefly-transmitted, bipartite closterovirus.</title>
        <authorList>
            <person name="Klaassen V.A."/>
            <person name="Boeshore M.L."/>
            <person name="Koonin E.V."/>
            <person name="Tian T."/>
            <person name="Falk B.W."/>
        </authorList>
    </citation>
    <scope>NUCLEOTIDE SEQUENCE [GENOMIC RNA]</scope>
</reference>
<reference key="2">
    <citation type="journal article" date="2009" name="Virus Res.">
        <title>Two Crinivirus-specific proteins of Lettuce infectious yellows virus (LIYV), P26 and P9, are self-interacting.</title>
        <authorList>
            <person name="Stewart L.R."/>
            <person name="Hwang M.S."/>
            <person name="Falk B.W."/>
        </authorList>
    </citation>
    <scope>SUBUNIT</scope>
</reference>
<evidence type="ECO:0000269" key="1">
    <source>
    </source>
</evidence>
<organismHost>
    <name type="scientific">Beta vulgaris</name>
    <name type="common">Sugar beet</name>
    <dbReference type="NCBI Taxonomy" id="161934"/>
</organismHost>
<organismHost>
    <name type="scientific">Citrullus lanatus</name>
    <name type="common">Watermelon</name>
    <name type="synonym">Citrullus vulgaris</name>
    <dbReference type="NCBI Taxonomy" id="3654"/>
</organismHost>
<organismHost>
    <name type="scientific">Cucumis melo</name>
    <name type="common">Muskmelon</name>
    <dbReference type="NCBI Taxonomy" id="3656"/>
</organismHost>
<organismHost>
    <name type="scientific">Cucurbita maxima</name>
    <name type="common">Pumpkin</name>
    <name type="synonym">Winter squash</name>
    <dbReference type="NCBI Taxonomy" id="3661"/>
</organismHost>
<organismHost>
    <name type="scientific">Cucurbita moschata</name>
    <name type="common">Winter crookneck squash</name>
    <name type="synonym">Cucurbita pepo var. moschata</name>
    <dbReference type="NCBI Taxonomy" id="3662"/>
</organismHost>
<organismHost>
    <name type="scientific">Cucurbita pepo</name>
    <name type="common">Vegetable marrow</name>
    <name type="synonym">Summer squash</name>
    <dbReference type="NCBI Taxonomy" id="3663"/>
</organismHost>
<organismHost>
    <name type="scientific">Daucus carota</name>
    <name type="common">Wild carrot</name>
    <dbReference type="NCBI Taxonomy" id="4039"/>
</organismHost>
<organismHost>
    <name type="scientific">Lactuca sativa</name>
    <name type="common">Garden lettuce</name>
    <dbReference type="NCBI Taxonomy" id="4236"/>
</organismHost>
<protein>
    <recommendedName>
        <fullName>Protein P9</fullName>
    </recommendedName>
</protein>
<name>P9_LIYV9</name>
<accession>P0C790</accession>
<feature type="chain" id="PRO_0000402506" description="Protein P9">
    <location>
        <begin position="1"/>
        <end position="80"/>
    </location>
</feature>
<sequence>MDTKTLIDKYNIENFTNYINFIIRNHQAGKGNLRFLVNLLKTTGGSNLKELDINPVEIENFNIDIYLDFLEFCLDSKFIF</sequence>
<organism>
    <name type="scientific">Lettuce infectious yellows virus (isolate United States/92)</name>
    <name type="common">LIYV</name>
    <dbReference type="NCBI Taxonomy" id="651355"/>
    <lineage>
        <taxon>Viruses</taxon>
        <taxon>Riboviria</taxon>
        <taxon>Orthornavirae</taxon>
        <taxon>Kitrinoviricota</taxon>
        <taxon>Alsuviricetes</taxon>
        <taxon>Martellivirales</taxon>
        <taxon>Closteroviridae</taxon>
        <taxon>Crinivirus</taxon>
        <taxon>Lettuce infectious yellows virus</taxon>
    </lineage>
</organism>
<keyword id="KW-1185">Reference proteome</keyword>